<gene>
    <name evidence="1" type="primary">atpA</name>
    <name type="ordered locus">AZOSEA16940</name>
    <name type="ORF">ebA3004</name>
</gene>
<feature type="chain" id="PRO_0000238191" description="ATP synthase subunit alpha">
    <location>
        <begin position="1"/>
        <end position="512"/>
    </location>
</feature>
<feature type="binding site" evidence="1">
    <location>
        <begin position="169"/>
        <end position="176"/>
    </location>
    <ligand>
        <name>ATP</name>
        <dbReference type="ChEBI" id="CHEBI:30616"/>
    </ligand>
</feature>
<feature type="site" description="Required for activity" evidence="1">
    <location>
        <position position="373"/>
    </location>
</feature>
<dbReference type="EC" id="7.1.2.2" evidence="1"/>
<dbReference type="EMBL" id="CR555306">
    <property type="protein sequence ID" value="CAI07819.1"/>
    <property type="molecule type" value="Genomic_DNA"/>
</dbReference>
<dbReference type="RefSeq" id="WP_011237533.1">
    <property type="nucleotide sequence ID" value="NC_006513.1"/>
</dbReference>
<dbReference type="SMR" id="Q5P4E4"/>
<dbReference type="STRING" id="76114.ebA3004"/>
<dbReference type="KEGG" id="eba:ebA3004"/>
<dbReference type="eggNOG" id="COG0056">
    <property type="taxonomic scope" value="Bacteria"/>
</dbReference>
<dbReference type="HOGENOM" id="CLU_010091_2_1_4"/>
<dbReference type="OrthoDB" id="9803053at2"/>
<dbReference type="Proteomes" id="UP000006552">
    <property type="component" value="Chromosome"/>
</dbReference>
<dbReference type="GO" id="GO:0005886">
    <property type="term" value="C:plasma membrane"/>
    <property type="evidence" value="ECO:0007669"/>
    <property type="project" value="UniProtKB-SubCell"/>
</dbReference>
<dbReference type="GO" id="GO:0045259">
    <property type="term" value="C:proton-transporting ATP synthase complex"/>
    <property type="evidence" value="ECO:0007669"/>
    <property type="project" value="UniProtKB-KW"/>
</dbReference>
<dbReference type="GO" id="GO:0043531">
    <property type="term" value="F:ADP binding"/>
    <property type="evidence" value="ECO:0007669"/>
    <property type="project" value="TreeGrafter"/>
</dbReference>
<dbReference type="GO" id="GO:0005524">
    <property type="term" value="F:ATP binding"/>
    <property type="evidence" value="ECO:0007669"/>
    <property type="project" value="UniProtKB-UniRule"/>
</dbReference>
<dbReference type="GO" id="GO:0046933">
    <property type="term" value="F:proton-transporting ATP synthase activity, rotational mechanism"/>
    <property type="evidence" value="ECO:0007669"/>
    <property type="project" value="UniProtKB-UniRule"/>
</dbReference>
<dbReference type="CDD" id="cd18113">
    <property type="entry name" value="ATP-synt_F1_alpha_C"/>
    <property type="match status" value="1"/>
</dbReference>
<dbReference type="CDD" id="cd18116">
    <property type="entry name" value="ATP-synt_F1_alpha_N"/>
    <property type="match status" value="1"/>
</dbReference>
<dbReference type="CDD" id="cd01132">
    <property type="entry name" value="F1-ATPase_alpha_CD"/>
    <property type="match status" value="1"/>
</dbReference>
<dbReference type="FunFam" id="1.20.150.20:FF:000001">
    <property type="entry name" value="ATP synthase subunit alpha"/>
    <property type="match status" value="1"/>
</dbReference>
<dbReference type="FunFam" id="2.40.30.20:FF:000001">
    <property type="entry name" value="ATP synthase subunit alpha"/>
    <property type="match status" value="1"/>
</dbReference>
<dbReference type="FunFam" id="3.40.50.300:FF:000002">
    <property type="entry name" value="ATP synthase subunit alpha"/>
    <property type="match status" value="1"/>
</dbReference>
<dbReference type="Gene3D" id="2.40.30.20">
    <property type="match status" value="1"/>
</dbReference>
<dbReference type="Gene3D" id="1.20.150.20">
    <property type="entry name" value="ATP synthase alpha/beta chain, C-terminal domain"/>
    <property type="match status" value="1"/>
</dbReference>
<dbReference type="Gene3D" id="3.40.50.300">
    <property type="entry name" value="P-loop containing nucleotide triphosphate hydrolases"/>
    <property type="match status" value="1"/>
</dbReference>
<dbReference type="HAMAP" id="MF_01346">
    <property type="entry name" value="ATP_synth_alpha_bact"/>
    <property type="match status" value="1"/>
</dbReference>
<dbReference type="InterPro" id="IPR023366">
    <property type="entry name" value="ATP_synth_asu-like_sf"/>
</dbReference>
<dbReference type="InterPro" id="IPR000793">
    <property type="entry name" value="ATP_synth_asu_C"/>
</dbReference>
<dbReference type="InterPro" id="IPR038376">
    <property type="entry name" value="ATP_synth_asu_C_sf"/>
</dbReference>
<dbReference type="InterPro" id="IPR033732">
    <property type="entry name" value="ATP_synth_F1_a_nt-bd_dom"/>
</dbReference>
<dbReference type="InterPro" id="IPR005294">
    <property type="entry name" value="ATP_synth_F1_asu"/>
</dbReference>
<dbReference type="InterPro" id="IPR020003">
    <property type="entry name" value="ATPase_a/bsu_AS"/>
</dbReference>
<dbReference type="InterPro" id="IPR004100">
    <property type="entry name" value="ATPase_F1/V1/A1_a/bsu_N"/>
</dbReference>
<dbReference type="InterPro" id="IPR036121">
    <property type="entry name" value="ATPase_F1/V1/A1_a/bsu_N_sf"/>
</dbReference>
<dbReference type="InterPro" id="IPR000194">
    <property type="entry name" value="ATPase_F1/V1/A1_a/bsu_nucl-bd"/>
</dbReference>
<dbReference type="InterPro" id="IPR027417">
    <property type="entry name" value="P-loop_NTPase"/>
</dbReference>
<dbReference type="NCBIfam" id="TIGR00962">
    <property type="entry name" value="atpA"/>
    <property type="match status" value="1"/>
</dbReference>
<dbReference type="NCBIfam" id="NF009884">
    <property type="entry name" value="PRK13343.1"/>
    <property type="match status" value="1"/>
</dbReference>
<dbReference type="PANTHER" id="PTHR48082">
    <property type="entry name" value="ATP SYNTHASE SUBUNIT ALPHA, MITOCHONDRIAL"/>
    <property type="match status" value="1"/>
</dbReference>
<dbReference type="PANTHER" id="PTHR48082:SF2">
    <property type="entry name" value="ATP SYNTHASE SUBUNIT ALPHA, MITOCHONDRIAL"/>
    <property type="match status" value="1"/>
</dbReference>
<dbReference type="Pfam" id="PF00006">
    <property type="entry name" value="ATP-synt_ab"/>
    <property type="match status" value="1"/>
</dbReference>
<dbReference type="Pfam" id="PF00306">
    <property type="entry name" value="ATP-synt_ab_C"/>
    <property type="match status" value="1"/>
</dbReference>
<dbReference type="Pfam" id="PF02874">
    <property type="entry name" value="ATP-synt_ab_N"/>
    <property type="match status" value="1"/>
</dbReference>
<dbReference type="PIRSF" id="PIRSF039088">
    <property type="entry name" value="F_ATPase_subunit_alpha"/>
    <property type="match status" value="1"/>
</dbReference>
<dbReference type="SUPFAM" id="SSF47917">
    <property type="entry name" value="C-terminal domain of alpha and beta subunits of F1 ATP synthase"/>
    <property type="match status" value="1"/>
</dbReference>
<dbReference type="SUPFAM" id="SSF50615">
    <property type="entry name" value="N-terminal domain of alpha and beta subunits of F1 ATP synthase"/>
    <property type="match status" value="1"/>
</dbReference>
<dbReference type="SUPFAM" id="SSF52540">
    <property type="entry name" value="P-loop containing nucleoside triphosphate hydrolases"/>
    <property type="match status" value="1"/>
</dbReference>
<dbReference type="PROSITE" id="PS00152">
    <property type="entry name" value="ATPASE_ALPHA_BETA"/>
    <property type="match status" value="1"/>
</dbReference>
<protein>
    <recommendedName>
        <fullName evidence="1">ATP synthase subunit alpha</fullName>
        <ecNumber evidence="1">7.1.2.2</ecNumber>
    </recommendedName>
    <alternativeName>
        <fullName evidence="1">ATP synthase F1 sector subunit alpha</fullName>
    </alternativeName>
    <alternativeName>
        <fullName evidence="1">F-ATPase subunit alpha</fullName>
    </alternativeName>
</protein>
<accession>Q5P4E4</accession>
<evidence type="ECO:0000255" key="1">
    <source>
        <dbReference type="HAMAP-Rule" id="MF_01346"/>
    </source>
</evidence>
<comment type="function">
    <text evidence="1">Produces ATP from ADP in the presence of a proton gradient across the membrane. The alpha chain is a regulatory subunit.</text>
</comment>
<comment type="catalytic activity">
    <reaction evidence="1">
        <text>ATP + H2O + 4 H(+)(in) = ADP + phosphate + 5 H(+)(out)</text>
        <dbReference type="Rhea" id="RHEA:57720"/>
        <dbReference type="ChEBI" id="CHEBI:15377"/>
        <dbReference type="ChEBI" id="CHEBI:15378"/>
        <dbReference type="ChEBI" id="CHEBI:30616"/>
        <dbReference type="ChEBI" id="CHEBI:43474"/>
        <dbReference type="ChEBI" id="CHEBI:456216"/>
        <dbReference type="EC" id="7.1.2.2"/>
    </reaction>
</comment>
<comment type="subunit">
    <text evidence="1">F-type ATPases have 2 components, CF(1) - the catalytic core - and CF(0) - the membrane proton channel. CF(1) has five subunits: alpha(3), beta(3), gamma(1), delta(1), epsilon(1). CF(0) has three main subunits: a(1), b(2) and c(9-12). The alpha and beta chains form an alternating ring which encloses part of the gamma chain. CF(1) is attached to CF(0) by a central stalk formed by the gamma and epsilon chains, while a peripheral stalk is formed by the delta and b chains.</text>
</comment>
<comment type="subcellular location">
    <subcellularLocation>
        <location evidence="1">Cell inner membrane</location>
        <topology evidence="1">Peripheral membrane protein</topology>
    </subcellularLocation>
</comment>
<comment type="similarity">
    <text evidence="1">Belongs to the ATPase alpha/beta chains family.</text>
</comment>
<name>ATPA_AROAE</name>
<sequence>MQLNPSEISDLIKSRIQNLQLAATSRNEGTVVSVTDGITRVHGLADVMQGEMLEFPGNTFGLALNLERDSVGAVVLGEYEHITEGDPVKATGRILEVPVGPELIGRVVNALGQPIDGKGPINAKLTDKIEKVAPGVIWRQSVSQPVQTGLKSVDAMVPIGRGQRELIIGDRQTGKTAVAVDAIINQKGQDMFCVYVAIGQKASTIANVVRKLEEHGAMEYTIVVAATASESAAMQFIAPYSGCTMGEYFRDRGQDALIIYDDLTKQAWAYRQISLLLRRPPGREAYPGDVFYLHSRLLERASRVSADHVEKFTNGEVKGKTGSLTALPIIETQAGDVSAFVPTNVISITDGQIFLDTDLFNAGIRPAINAGISVSRVGGAAQTKVIKKLSGGIRTDLAQYRELAAFAQFASDLDDATRKQLERGRRVTELMKQPQYAPLSVADMAITLYAVNNGYFDDVEVPRLLAFESGLQQYVKAKNPALVTKIMTSKELDADGEKQLVAVIDEFKKSWA</sequence>
<reference key="1">
    <citation type="journal article" date="2005" name="Arch. Microbiol.">
        <title>The genome sequence of an anaerobic aromatic-degrading denitrifying bacterium, strain EbN1.</title>
        <authorList>
            <person name="Rabus R."/>
            <person name="Kube M."/>
            <person name="Heider J."/>
            <person name="Beck A."/>
            <person name="Heitmann K."/>
            <person name="Widdel F."/>
            <person name="Reinhardt R."/>
        </authorList>
    </citation>
    <scope>NUCLEOTIDE SEQUENCE [LARGE SCALE GENOMIC DNA]</scope>
    <source>
        <strain>DSM 19018 / LMG 30748 / EbN1</strain>
    </source>
</reference>
<organism>
    <name type="scientific">Aromatoleum aromaticum (strain DSM 19018 / LMG 30748 / EbN1)</name>
    <name type="common">Azoarcus sp. (strain EbN1)</name>
    <dbReference type="NCBI Taxonomy" id="76114"/>
    <lineage>
        <taxon>Bacteria</taxon>
        <taxon>Pseudomonadati</taxon>
        <taxon>Pseudomonadota</taxon>
        <taxon>Betaproteobacteria</taxon>
        <taxon>Rhodocyclales</taxon>
        <taxon>Rhodocyclaceae</taxon>
        <taxon>Aromatoleum</taxon>
    </lineage>
</organism>
<proteinExistence type="inferred from homology"/>
<keyword id="KW-0066">ATP synthesis</keyword>
<keyword id="KW-0067">ATP-binding</keyword>
<keyword id="KW-0997">Cell inner membrane</keyword>
<keyword id="KW-1003">Cell membrane</keyword>
<keyword id="KW-0139">CF(1)</keyword>
<keyword id="KW-0375">Hydrogen ion transport</keyword>
<keyword id="KW-0406">Ion transport</keyword>
<keyword id="KW-0472">Membrane</keyword>
<keyword id="KW-0547">Nucleotide-binding</keyword>
<keyword id="KW-1185">Reference proteome</keyword>
<keyword id="KW-1278">Translocase</keyword>
<keyword id="KW-0813">Transport</keyword>